<keyword id="KW-0413">Isomerase</keyword>
<keyword id="KW-1185">Reference proteome</keyword>
<keyword id="KW-0819">tRNA processing</keyword>
<evidence type="ECO:0000255" key="1">
    <source>
        <dbReference type="HAMAP-Rule" id="MF_01080"/>
    </source>
</evidence>
<feature type="chain" id="PRO_0000121801" description="tRNA pseudouridine synthase B">
    <location>
        <begin position="1"/>
        <end position="244"/>
    </location>
</feature>
<feature type="active site" description="Nucleophile" evidence="1">
    <location>
        <position position="46"/>
    </location>
</feature>
<proteinExistence type="inferred from homology"/>
<comment type="function">
    <text evidence="1">Responsible for synthesis of pseudouridine from uracil-55 in the psi GC loop of transfer RNAs.</text>
</comment>
<comment type="catalytic activity">
    <reaction evidence="1">
        <text>uridine(55) in tRNA = pseudouridine(55) in tRNA</text>
        <dbReference type="Rhea" id="RHEA:42532"/>
        <dbReference type="Rhea" id="RHEA-COMP:10101"/>
        <dbReference type="Rhea" id="RHEA-COMP:10102"/>
        <dbReference type="ChEBI" id="CHEBI:65314"/>
        <dbReference type="ChEBI" id="CHEBI:65315"/>
        <dbReference type="EC" id="5.4.99.25"/>
    </reaction>
</comment>
<comment type="similarity">
    <text evidence="1">Belongs to the pseudouridine synthase TruB family. Type 1 subfamily.</text>
</comment>
<organism>
    <name type="scientific">Bordetella pertussis (strain Tohama I / ATCC BAA-589 / NCTC 13251)</name>
    <dbReference type="NCBI Taxonomy" id="257313"/>
    <lineage>
        <taxon>Bacteria</taxon>
        <taxon>Pseudomonadati</taxon>
        <taxon>Pseudomonadota</taxon>
        <taxon>Betaproteobacteria</taxon>
        <taxon>Burkholderiales</taxon>
        <taxon>Alcaligenaceae</taxon>
        <taxon>Bordetella</taxon>
    </lineage>
</organism>
<name>TRUB_BORPE</name>
<dbReference type="EC" id="5.4.99.25" evidence="1"/>
<dbReference type="EMBL" id="BX640414">
    <property type="protein sequence ID" value="CAE41545.1"/>
    <property type="molecule type" value="Genomic_DNA"/>
</dbReference>
<dbReference type="RefSeq" id="NP_880021.1">
    <property type="nucleotide sequence ID" value="NC_002929.2"/>
</dbReference>
<dbReference type="RefSeq" id="WP_003810552.1">
    <property type="nucleotide sequence ID" value="NZ_CP039022.1"/>
</dbReference>
<dbReference type="SMR" id="P65852"/>
<dbReference type="STRING" id="257313.BP1249"/>
<dbReference type="PaxDb" id="257313-BP1249"/>
<dbReference type="GeneID" id="69601166"/>
<dbReference type="KEGG" id="bpe:BP1249"/>
<dbReference type="PATRIC" id="fig|257313.5.peg.1345"/>
<dbReference type="eggNOG" id="COG0130">
    <property type="taxonomic scope" value="Bacteria"/>
</dbReference>
<dbReference type="HOGENOM" id="CLU_032087_2_0_4"/>
<dbReference type="Proteomes" id="UP000002676">
    <property type="component" value="Chromosome"/>
</dbReference>
<dbReference type="GO" id="GO:0003723">
    <property type="term" value="F:RNA binding"/>
    <property type="evidence" value="ECO:0007669"/>
    <property type="project" value="InterPro"/>
</dbReference>
<dbReference type="GO" id="GO:0160148">
    <property type="term" value="F:tRNA pseudouridine(55) synthase activity"/>
    <property type="evidence" value="ECO:0007669"/>
    <property type="project" value="UniProtKB-EC"/>
</dbReference>
<dbReference type="GO" id="GO:1990481">
    <property type="term" value="P:mRNA pseudouridine synthesis"/>
    <property type="evidence" value="ECO:0007669"/>
    <property type="project" value="TreeGrafter"/>
</dbReference>
<dbReference type="GO" id="GO:0031119">
    <property type="term" value="P:tRNA pseudouridine synthesis"/>
    <property type="evidence" value="ECO:0007669"/>
    <property type="project" value="UniProtKB-UniRule"/>
</dbReference>
<dbReference type="CDD" id="cd02573">
    <property type="entry name" value="PseudoU_synth_EcTruB"/>
    <property type="match status" value="1"/>
</dbReference>
<dbReference type="Gene3D" id="3.30.2350.10">
    <property type="entry name" value="Pseudouridine synthase"/>
    <property type="match status" value="1"/>
</dbReference>
<dbReference type="HAMAP" id="MF_01080">
    <property type="entry name" value="TruB_bact"/>
    <property type="match status" value="1"/>
</dbReference>
<dbReference type="InterPro" id="IPR020103">
    <property type="entry name" value="PsdUridine_synth_cat_dom_sf"/>
</dbReference>
<dbReference type="InterPro" id="IPR002501">
    <property type="entry name" value="PsdUridine_synth_N"/>
</dbReference>
<dbReference type="InterPro" id="IPR014780">
    <property type="entry name" value="tRNA_psdUridine_synth_TruB"/>
</dbReference>
<dbReference type="InterPro" id="IPR032819">
    <property type="entry name" value="TruB_C"/>
</dbReference>
<dbReference type="NCBIfam" id="TIGR00431">
    <property type="entry name" value="TruB"/>
    <property type="match status" value="1"/>
</dbReference>
<dbReference type="PANTHER" id="PTHR13767:SF2">
    <property type="entry name" value="PSEUDOURIDYLATE SYNTHASE TRUB1"/>
    <property type="match status" value="1"/>
</dbReference>
<dbReference type="PANTHER" id="PTHR13767">
    <property type="entry name" value="TRNA-PSEUDOURIDINE SYNTHASE"/>
    <property type="match status" value="1"/>
</dbReference>
<dbReference type="Pfam" id="PF16198">
    <property type="entry name" value="TruB_C_2"/>
    <property type="match status" value="1"/>
</dbReference>
<dbReference type="Pfam" id="PF01509">
    <property type="entry name" value="TruB_N"/>
    <property type="match status" value="1"/>
</dbReference>
<dbReference type="SUPFAM" id="SSF55120">
    <property type="entry name" value="Pseudouridine synthase"/>
    <property type="match status" value="1"/>
</dbReference>
<reference key="1">
    <citation type="journal article" date="2003" name="Nat. Genet.">
        <title>Comparative analysis of the genome sequences of Bordetella pertussis, Bordetella parapertussis and Bordetella bronchiseptica.</title>
        <authorList>
            <person name="Parkhill J."/>
            <person name="Sebaihia M."/>
            <person name="Preston A."/>
            <person name="Murphy L.D."/>
            <person name="Thomson N.R."/>
            <person name="Harris D.E."/>
            <person name="Holden M.T.G."/>
            <person name="Churcher C.M."/>
            <person name="Bentley S.D."/>
            <person name="Mungall K.L."/>
            <person name="Cerdeno-Tarraga A.-M."/>
            <person name="Temple L."/>
            <person name="James K.D."/>
            <person name="Harris B."/>
            <person name="Quail M.A."/>
            <person name="Achtman M."/>
            <person name="Atkin R."/>
            <person name="Baker S."/>
            <person name="Basham D."/>
            <person name="Bason N."/>
            <person name="Cherevach I."/>
            <person name="Chillingworth T."/>
            <person name="Collins M."/>
            <person name="Cronin A."/>
            <person name="Davis P."/>
            <person name="Doggett J."/>
            <person name="Feltwell T."/>
            <person name="Goble A."/>
            <person name="Hamlin N."/>
            <person name="Hauser H."/>
            <person name="Holroyd S."/>
            <person name="Jagels K."/>
            <person name="Leather S."/>
            <person name="Moule S."/>
            <person name="Norberczak H."/>
            <person name="O'Neil S."/>
            <person name="Ormond D."/>
            <person name="Price C."/>
            <person name="Rabbinowitsch E."/>
            <person name="Rutter S."/>
            <person name="Sanders M."/>
            <person name="Saunders D."/>
            <person name="Seeger K."/>
            <person name="Sharp S."/>
            <person name="Simmonds M."/>
            <person name="Skelton J."/>
            <person name="Squares R."/>
            <person name="Squares S."/>
            <person name="Stevens K."/>
            <person name="Unwin L."/>
            <person name="Whitehead S."/>
            <person name="Barrell B.G."/>
            <person name="Maskell D.J."/>
        </authorList>
    </citation>
    <scope>NUCLEOTIDE SEQUENCE [LARGE SCALE GENOMIC DNA]</scope>
    <source>
        <strain>Tohama I / ATCC BAA-589 / NCTC 13251</strain>
    </source>
</reference>
<sequence length="244" mass="26181">MAKRRGLALDGVLLLDKPVGLSSNHALQRAKRTVDAAKAGHTGTLDPFATGLLVCCMGRATKISGRMLEADKTYQATLQFGEETDSGDLTGHIVARAPDGFAGVEEAALRDVLSRFVGTIEQIPPMYSALKRDGKPLYEYARAGIELDRPPRQVTIRHIELLSFSGMQAQIDVACSKGTYIRTLAQDIGRALGCHAHLAALRRTHVGPFSLDRAVTLEALQAMPDAKQALLAMNELPAGLLPAT</sequence>
<gene>
    <name evidence="1" type="primary">truB</name>
    <name type="ordered locus">BP1249</name>
</gene>
<accession>P65852</accession>
<accession>P59875</accession>
<protein>
    <recommendedName>
        <fullName evidence="1">tRNA pseudouridine synthase B</fullName>
        <ecNumber evidence="1">5.4.99.25</ecNumber>
    </recommendedName>
    <alternativeName>
        <fullName evidence="1">tRNA pseudouridine(55) synthase</fullName>
        <shortName evidence="1">Psi55 synthase</shortName>
    </alternativeName>
    <alternativeName>
        <fullName evidence="1">tRNA pseudouridylate synthase</fullName>
    </alternativeName>
    <alternativeName>
        <fullName evidence="1">tRNA-uridine isomerase</fullName>
    </alternativeName>
</protein>